<comment type="function">
    <text evidence="1">Putative TATA-binding protein.</text>
</comment>
<comment type="induction">
    <text evidence="2">Expressed in the early phase of the viral replicative cycle.</text>
</comment>
<comment type="domain">
    <text evidence="1">Possibly contains a TATA-binding domain.</text>
</comment>
<comment type="similarity">
    <text evidence="2">Belongs to the asfivirus B263R family.</text>
</comment>
<evidence type="ECO:0000250" key="1">
    <source>
        <dbReference type="UniProtKB" id="Q65175"/>
    </source>
</evidence>
<evidence type="ECO:0000305" key="2"/>
<accession>P0CAC4</accession>
<organism>
    <name type="scientific">African swine fever virus (isolate Warthog/Namibia/Wart80/1980)</name>
    <name type="common">ASFV</name>
    <dbReference type="NCBI Taxonomy" id="561444"/>
    <lineage>
        <taxon>Viruses</taxon>
        <taxon>Varidnaviria</taxon>
        <taxon>Bamfordvirae</taxon>
        <taxon>Nucleocytoviricota</taxon>
        <taxon>Pokkesviricetes</taxon>
        <taxon>Asfuvirales</taxon>
        <taxon>Asfarviridae</taxon>
        <taxon>Asfivirus</taxon>
        <taxon>African swine fever virus</taxon>
    </lineage>
</organism>
<proteinExistence type="inferred from homology"/>
<sequence length="263" mass="30087">MEDETELCFRSNKVTRLEMFVCTYGGKISSLACSHMELIKILQIAEPVKALNCNFGHQCLPGYESLIKTPKKTKNMLRRPRKTEGDGTCFNSAIEASILFKDKMYKLKCFPSTGEIQVPGVIFPDFEDGKNIIQQWVDFLQHQPIEKKIQIIEFKTIMINFKFQINPVSPRVIIHLKKFAALLEHIPTPYPIREIKPPLEDSKVSAKFMVSPGKKVRINVFLKGKINILGCNTKESAETIYTFLKDLISVHWQEILCVLPVPD</sequence>
<organismHost>
    <name type="scientific">Ornithodoros</name>
    <name type="common">relapsing fever ticks</name>
    <dbReference type="NCBI Taxonomy" id="6937"/>
</organismHost>
<organismHost>
    <name type="scientific">Phacochoerus aethiopicus</name>
    <name type="common">Warthog</name>
    <dbReference type="NCBI Taxonomy" id="85517"/>
</organismHost>
<organismHost>
    <name type="scientific">Phacochoerus africanus</name>
    <name type="common">Warthog</name>
    <dbReference type="NCBI Taxonomy" id="41426"/>
</organismHost>
<organismHost>
    <name type="scientific">Potamochoerus larvatus</name>
    <name type="common">Bushpig</name>
    <dbReference type="NCBI Taxonomy" id="273792"/>
</organismHost>
<organismHost>
    <name type="scientific">Sus scrofa</name>
    <name type="common">Pig</name>
    <dbReference type="NCBI Taxonomy" id="9823"/>
</organismHost>
<keyword id="KW-0244">Early protein</keyword>
<protein>
    <recommendedName>
        <fullName evidence="1">Putative TATA-binding protein pB263R</fullName>
        <shortName evidence="1">TBP</shortName>
    </recommendedName>
</protein>
<gene>
    <name type="ordered locus">War-096</name>
</gene>
<reference key="1">
    <citation type="submission" date="2003-03" db="EMBL/GenBank/DDBJ databases">
        <title>African swine fever virus genomes.</title>
        <authorList>
            <person name="Kutish G.F."/>
            <person name="Rock D.L."/>
        </authorList>
    </citation>
    <scope>NUCLEOTIDE SEQUENCE [LARGE SCALE GENOMIC DNA]</scope>
</reference>
<name>TBP_ASFWA</name>
<feature type="chain" id="PRO_0000373623" description="Putative TATA-binding protein pB263R">
    <location>
        <begin position="1"/>
        <end position="263"/>
    </location>
</feature>
<dbReference type="EMBL" id="AY261366">
    <property type="status" value="NOT_ANNOTATED_CDS"/>
    <property type="molecule type" value="Genomic_DNA"/>
</dbReference>
<dbReference type="Proteomes" id="UP000000858">
    <property type="component" value="Segment"/>
</dbReference>